<proteinExistence type="inferred from homology"/>
<dbReference type="EC" id="2.1.1.77" evidence="1"/>
<dbReference type="EMBL" id="CP000698">
    <property type="protein sequence ID" value="ABQ25812.1"/>
    <property type="molecule type" value="Genomic_DNA"/>
</dbReference>
<dbReference type="RefSeq" id="WP_011938522.1">
    <property type="nucleotide sequence ID" value="NC_009483.1"/>
</dbReference>
<dbReference type="SMR" id="A5GEF7"/>
<dbReference type="STRING" id="351605.Gura_1616"/>
<dbReference type="KEGG" id="gur:Gura_1616"/>
<dbReference type="HOGENOM" id="CLU_055432_2_0_7"/>
<dbReference type="OrthoDB" id="9810066at2"/>
<dbReference type="Proteomes" id="UP000006695">
    <property type="component" value="Chromosome"/>
</dbReference>
<dbReference type="GO" id="GO:0005737">
    <property type="term" value="C:cytoplasm"/>
    <property type="evidence" value="ECO:0007669"/>
    <property type="project" value="UniProtKB-SubCell"/>
</dbReference>
<dbReference type="GO" id="GO:0004719">
    <property type="term" value="F:protein-L-isoaspartate (D-aspartate) O-methyltransferase activity"/>
    <property type="evidence" value="ECO:0007669"/>
    <property type="project" value="UniProtKB-UniRule"/>
</dbReference>
<dbReference type="GO" id="GO:0032259">
    <property type="term" value="P:methylation"/>
    <property type="evidence" value="ECO:0007669"/>
    <property type="project" value="UniProtKB-KW"/>
</dbReference>
<dbReference type="GO" id="GO:0036211">
    <property type="term" value="P:protein modification process"/>
    <property type="evidence" value="ECO:0007669"/>
    <property type="project" value="UniProtKB-UniRule"/>
</dbReference>
<dbReference type="GO" id="GO:0030091">
    <property type="term" value="P:protein repair"/>
    <property type="evidence" value="ECO:0007669"/>
    <property type="project" value="UniProtKB-UniRule"/>
</dbReference>
<dbReference type="CDD" id="cd02440">
    <property type="entry name" value="AdoMet_MTases"/>
    <property type="match status" value="1"/>
</dbReference>
<dbReference type="FunFam" id="3.40.50.150:FF:000010">
    <property type="entry name" value="Protein-L-isoaspartate O-methyltransferase"/>
    <property type="match status" value="1"/>
</dbReference>
<dbReference type="Gene3D" id="3.40.50.150">
    <property type="entry name" value="Vaccinia Virus protein VP39"/>
    <property type="match status" value="1"/>
</dbReference>
<dbReference type="HAMAP" id="MF_00090">
    <property type="entry name" value="PIMT"/>
    <property type="match status" value="1"/>
</dbReference>
<dbReference type="InterPro" id="IPR000682">
    <property type="entry name" value="PCMT"/>
</dbReference>
<dbReference type="InterPro" id="IPR029063">
    <property type="entry name" value="SAM-dependent_MTases_sf"/>
</dbReference>
<dbReference type="NCBIfam" id="TIGR00080">
    <property type="entry name" value="pimt"/>
    <property type="match status" value="1"/>
</dbReference>
<dbReference type="NCBIfam" id="NF001453">
    <property type="entry name" value="PRK00312.1"/>
    <property type="match status" value="1"/>
</dbReference>
<dbReference type="PANTHER" id="PTHR11579">
    <property type="entry name" value="PROTEIN-L-ISOASPARTATE O-METHYLTRANSFERASE"/>
    <property type="match status" value="1"/>
</dbReference>
<dbReference type="PANTHER" id="PTHR11579:SF0">
    <property type="entry name" value="PROTEIN-L-ISOASPARTATE(D-ASPARTATE) O-METHYLTRANSFERASE"/>
    <property type="match status" value="1"/>
</dbReference>
<dbReference type="Pfam" id="PF01135">
    <property type="entry name" value="PCMT"/>
    <property type="match status" value="1"/>
</dbReference>
<dbReference type="SUPFAM" id="SSF53335">
    <property type="entry name" value="S-adenosyl-L-methionine-dependent methyltransferases"/>
    <property type="match status" value="1"/>
</dbReference>
<dbReference type="PROSITE" id="PS01279">
    <property type="entry name" value="PCMT"/>
    <property type="match status" value="1"/>
</dbReference>
<feature type="chain" id="PRO_0000351862" description="Protein-L-isoaspartate O-methyltransferase 1">
    <location>
        <begin position="1"/>
        <end position="219"/>
    </location>
</feature>
<feature type="active site" evidence="1">
    <location>
        <position position="67"/>
    </location>
</feature>
<organism>
    <name type="scientific">Geotalea uraniireducens (strain Rf4)</name>
    <name type="common">Geobacter uraniireducens</name>
    <dbReference type="NCBI Taxonomy" id="351605"/>
    <lineage>
        <taxon>Bacteria</taxon>
        <taxon>Pseudomonadati</taxon>
        <taxon>Thermodesulfobacteriota</taxon>
        <taxon>Desulfuromonadia</taxon>
        <taxon>Geobacterales</taxon>
        <taxon>Geobacteraceae</taxon>
        <taxon>Geotalea</taxon>
    </lineage>
</organism>
<keyword id="KW-0963">Cytoplasm</keyword>
<keyword id="KW-0489">Methyltransferase</keyword>
<keyword id="KW-1185">Reference proteome</keyword>
<keyword id="KW-0949">S-adenosyl-L-methionine</keyword>
<keyword id="KW-0808">Transferase</keyword>
<sequence length="219" mass="24119">MKLHFVKNLADRREIMMNYHLLARGIRDPAVLKAMLEVPREAFVAEGMEELAYDDYALPIDEGQTISQPYIVAYMAESLELSAADRVLEIGTGSGYAAAVLSRIVSTVYTVERLAGLARSAHQRLEMLSYGNIHVLEGDGTLGWPEYAPYDAIVVTAGAPDLPKPLLSQLSVGGRLVIPVGATPYLQMLVRVRRVSEEEYRSEELCPVRFVPLIGAAGW</sequence>
<reference key="1">
    <citation type="submission" date="2007-05" db="EMBL/GenBank/DDBJ databases">
        <title>Complete sequence of Geobacter uraniireducens Rf4.</title>
        <authorList>
            <consortium name="US DOE Joint Genome Institute"/>
            <person name="Copeland A."/>
            <person name="Lucas S."/>
            <person name="Lapidus A."/>
            <person name="Barry K."/>
            <person name="Detter J.C."/>
            <person name="Glavina del Rio T."/>
            <person name="Hammon N."/>
            <person name="Israni S."/>
            <person name="Dalin E."/>
            <person name="Tice H."/>
            <person name="Pitluck S."/>
            <person name="Chertkov O."/>
            <person name="Brettin T."/>
            <person name="Bruce D."/>
            <person name="Han C."/>
            <person name="Schmutz J."/>
            <person name="Larimer F."/>
            <person name="Land M."/>
            <person name="Hauser L."/>
            <person name="Kyrpides N."/>
            <person name="Mikhailova N."/>
            <person name="Shelobolina E."/>
            <person name="Aklujkar M."/>
            <person name="Lovley D."/>
            <person name="Richardson P."/>
        </authorList>
    </citation>
    <scope>NUCLEOTIDE SEQUENCE [LARGE SCALE GENOMIC DNA]</scope>
    <source>
        <strain>ATCC BAA-1134 / JCM 13001 / Rf4</strain>
    </source>
</reference>
<name>PIMT1_GEOUR</name>
<protein>
    <recommendedName>
        <fullName evidence="1">Protein-L-isoaspartate O-methyltransferase 1</fullName>
        <ecNumber evidence="1">2.1.1.77</ecNumber>
    </recommendedName>
    <alternativeName>
        <fullName evidence="1">L-isoaspartyl protein carboxyl methyltransferase 1</fullName>
    </alternativeName>
    <alternativeName>
        <fullName evidence="1">Protein L-isoaspartyl methyltransferase 1</fullName>
    </alternativeName>
    <alternativeName>
        <fullName evidence="1">Protein-beta-aspartate methyltransferase 1</fullName>
        <shortName evidence="1">PIMT 1</shortName>
    </alternativeName>
</protein>
<evidence type="ECO:0000255" key="1">
    <source>
        <dbReference type="HAMAP-Rule" id="MF_00090"/>
    </source>
</evidence>
<accession>A5GEF7</accession>
<comment type="function">
    <text evidence="1">Catalyzes the methyl esterification of L-isoaspartyl residues in peptides and proteins that result from spontaneous decomposition of normal L-aspartyl and L-asparaginyl residues. It plays a role in the repair and/or degradation of damaged proteins.</text>
</comment>
<comment type="catalytic activity">
    <reaction evidence="1">
        <text>[protein]-L-isoaspartate + S-adenosyl-L-methionine = [protein]-L-isoaspartate alpha-methyl ester + S-adenosyl-L-homocysteine</text>
        <dbReference type="Rhea" id="RHEA:12705"/>
        <dbReference type="Rhea" id="RHEA-COMP:12143"/>
        <dbReference type="Rhea" id="RHEA-COMP:12144"/>
        <dbReference type="ChEBI" id="CHEBI:57856"/>
        <dbReference type="ChEBI" id="CHEBI:59789"/>
        <dbReference type="ChEBI" id="CHEBI:90596"/>
        <dbReference type="ChEBI" id="CHEBI:90598"/>
        <dbReference type="EC" id="2.1.1.77"/>
    </reaction>
</comment>
<comment type="subcellular location">
    <subcellularLocation>
        <location evidence="1">Cytoplasm</location>
    </subcellularLocation>
</comment>
<comment type="similarity">
    <text evidence="1">Belongs to the methyltransferase superfamily. L-isoaspartyl/D-aspartyl protein methyltransferase family.</text>
</comment>
<gene>
    <name evidence="1" type="primary">pcm1</name>
    <name type="ordered locus">Gura_1616</name>
</gene>